<reference key="1">
    <citation type="journal article" date="2008" name="BMC Microbiol.">
        <title>Complete genome sequence of Treponema pallidum ssp. pallidum strain SS14 determined with oligonucleotide arrays.</title>
        <authorList>
            <person name="Matejkova P."/>
            <person name="Strouhal M."/>
            <person name="Smajs D."/>
            <person name="Norris S.J."/>
            <person name="Palzkill T."/>
            <person name="Petrosino J.F."/>
            <person name="Sodergren E."/>
            <person name="Norton J.E."/>
            <person name="Singh J."/>
            <person name="Richmond T.A."/>
            <person name="Molla M.N."/>
            <person name="Albert T.J."/>
            <person name="Weinstock G.M."/>
        </authorList>
    </citation>
    <scope>NUCLEOTIDE SEQUENCE [LARGE SCALE GENOMIC DNA]</scope>
    <source>
        <strain>SS14</strain>
    </source>
</reference>
<keyword id="KW-0687">Ribonucleoprotein</keyword>
<keyword id="KW-0689">Ribosomal protein</keyword>
<keyword id="KW-0694">RNA-binding</keyword>
<keyword id="KW-0699">rRNA-binding</keyword>
<keyword id="KW-0820">tRNA-binding</keyword>
<name>RL5_TREPS</name>
<proteinExistence type="inferred from homology"/>
<gene>
    <name evidence="1" type="primary">rplE</name>
    <name type="ordered locus">TPASS_0201</name>
</gene>
<feature type="chain" id="PRO_1000142468" description="Large ribosomal subunit protein uL5">
    <location>
        <begin position="1"/>
        <end position="185"/>
    </location>
</feature>
<accession>B2S2E8</accession>
<organism>
    <name type="scientific">Treponema pallidum subsp. pallidum (strain SS14)</name>
    <dbReference type="NCBI Taxonomy" id="455434"/>
    <lineage>
        <taxon>Bacteria</taxon>
        <taxon>Pseudomonadati</taxon>
        <taxon>Spirochaetota</taxon>
        <taxon>Spirochaetia</taxon>
        <taxon>Spirochaetales</taxon>
        <taxon>Treponemataceae</taxon>
        <taxon>Treponema</taxon>
    </lineage>
</organism>
<protein>
    <recommendedName>
        <fullName evidence="1">Large ribosomal subunit protein uL5</fullName>
    </recommendedName>
    <alternativeName>
        <fullName evidence="2">50S ribosomal protein L5</fullName>
    </alternativeName>
</protein>
<evidence type="ECO:0000255" key="1">
    <source>
        <dbReference type="HAMAP-Rule" id="MF_01333"/>
    </source>
</evidence>
<evidence type="ECO:0000305" key="2"/>
<comment type="function">
    <text evidence="1">This is one of the proteins that bind and probably mediate the attachment of the 5S RNA into the large ribosomal subunit, where it forms part of the central protuberance. In the 70S ribosome it contacts protein S13 of the 30S subunit (bridge B1b), connecting the 2 subunits; this bridge is implicated in subunit movement. Contacts the P site tRNA; the 5S rRNA and some of its associated proteins might help stabilize positioning of ribosome-bound tRNAs.</text>
</comment>
<comment type="subunit">
    <text evidence="1">Part of the 50S ribosomal subunit; part of the 5S rRNA/L5/L18/L25 subcomplex. Contacts the 5S rRNA and the P site tRNA. Forms a bridge to the 30S subunit in the 70S ribosome.</text>
</comment>
<comment type="similarity">
    <text evidence="1">Belongs to the universal ribosomal protein uL5 family.</text>
</comment>
<sequence>MTDHSCIPELKVRYVQQIVPDMMRDFGYSTVMQVPKLLKIVLSMGLGEALANRKLLDASVADLGVISGQHAVKTRARKSIANFKLREGNEIGVMVTLRRSRMYEFLHRLINVALPRVKDFRGVSPXGFDGHGNYSMGITEQIIFPEIDFDKIERISGLNVNVVTSAQTDQEARTLLTKLGMPFRK</sequence>
<dbReference type="EMBL" id="CP000805">
    <property type="protein sequence ID" value="ACD70627.1"/>
    <property type="molecule type" value="Genomic_DNA"/>
</dbReference>
<dbReference type="RefSeq" id="WP_010881648.1">
    <property type="nucleotide sequence ID" value="NC_010741.1"/>
</dbReference>
<dbReference type="KEGG" id="tpp:TPASS_0201"/>
<dbReference type="PATRIC" id="fig|243276.5.peg.217"/>
<dbReference type="Proteomes" id="UP000001202">
    <property type="component" value="Chromosome"/>
</dbReference>
<dbReference type="GO" id="GO:1990904">
    <property type="term" value="C:ribonucleoprotein complex"/>
    <property type="evidence" value="ECO:0007669"/>
    <property type="project" value="UniProtKB-KW"/>
</dbReference>
<dbReference type="GO" id="GO:0005840">
    <property type="term" value="C:ribosome"/>
    <property type="evidence" value="ECO:0007669"/>
    <property type="project" value="UniProtKB-KW"/>
</dbReference>
<dbReference type="GO" id="GO:0019843">
    <property type="term" value="F:rRNA binding"/>
    <property type="evidence" value="ECO:0007669"/>
    <property type="project" value="UniProtKB-UniRule"/>
</dbReference>
<dbReference type="GO" id="GO:0003735">
    <property type="term" value="F:structural constituent of ribosome"/>
    <property type="evidence" value="ECO:0007669"/>
    <property type="project" value="InterPro"/>
</dbReference>
<dbReference type="GO" id="GO:0000049">
    <property type="term" value="F:tRNA binding"/>
    <property type="evidence" value="ECO:0007669"/>
    <property type="project" value="UniProtKB-UniRule"/>
</dbReference>
<dbReference type="GO" id="GO:0006412">
    <property type="term" value="P:translation"/>
    <property type="evidence" value="ECO:0007669"/>
    <property type="project" value="UniProtKB-UniRule"/>
</dbReference>
<dbReference type="FunFam" id="3.30.1440.10:FF:000001">
    <property type="entry name" value="50S ribosomal protein L5"/>
    <property type="match status" value="1"/>
</dbReference>
<dbReference type="Gene3D" id="3.30.1440.10">
    <property type="match status" value="1"/>
</dbReference>
<dbReference type="HAMAP" id="MF_01333_B">
    <property type="entry name" value="Ribosomal_uL5_B"/>
    <property type="match status" value="1"/>
</dbReference>
<dbReference type="InterPro" id="IPR002132">
    <property type="entry name" value="Ribosomal_uL5"/>
</dbReference>
<dbReference type="InterPro" id="IPR020930">
    <property type="entry name" value="Ribosomal_uL5_bac-type"/>
</dbReference>
<dbReference type="InterPro" id="IPR031309">
    <property type="entry name" value="Ribosomal_uL5_C"/>
</dbReference>
<dbReference type="InterPro" id="IPR020929">
    <property type="entry name" value="Ribosomal_uL5_CS"/>
</dbReference>
<dbReference type="InterPro" id="IPR022803">
    <property type="entry name" value="Ribosomal_uL5_dom_sf"/>
</dbReference>
<dbReference type="InterPro" id="IPR031310">
    <property type="entry name" value="Ribosomal_uL5_N"/>
</dbReference>
<dbReference type="NCBIfam" id="NF000585">
    <property type="entry name" value="PRK00010.1"/>
    <property type="match status" value="1"/>
</dbReference>
<dbReference type="PANTHER" id="PTHR11994">
    <property type="entry name" value="60S RIBOSOMAL PROTEIN L11-RELATED"/>
    <property type="match status" value="1"/>
</dbReference>
<dbReference type="Pfam" id="PF00281">
    <property type="entry name" value="Ribosomal_L5"/>
    <property type="match status" value="1"/>
</dbReference>
<dbReference type="Pfam" id="PF00673">
    <property type="entry name" value="Ribosomal_L5_C"/>
    <property type="match status" value="1"/>
</dbReference>
<dbReference type="PIRSF" id="PIRSF002161">
    <property type="entry name" value="Ribosomal_L5"/>
    <property type="match status" value="1"/>
</dbReference>
<dbReference type="SUPFAM" id="SSF55282">
    <property type="entry name" value="RL5-like"/>
    <property type="match status" value="1"/>
</dbReference>
<dbReference type="PROSITE" id="PS00358">
    <property type="entry name" value="RIBOSOMAL_L5"/>
    <property type="match status" value="1"/>
</dbReference>